<reference key="1">
    <citation type="submission" date="2006-08" db="EMBL/GenBank/DDBJ databases">
        <title>Cytokine gene single nucleotide polymorphism (SNP) screening analyses in canine malignant histiocytosis.</title>
        <authorList>
            <person name="Soller J.T."/>
            <person name="Murua Escobar H."/>
            <person name="Janssen M."/>
            <person name="Fork M."/>
            <person name="Bullerdiek J."/>
            <person name="Nolte I."/>
        </authorList>
    </citation>
    <scope>NUCLEOTIDE SEQUENCE [MRNA]</scope>
</reference>
<reference key="2">
    <citation type="submission" date="1996-03" db="EMBL/GenBank/DDBJ databases">
        <title>Expression of canine TNF, IL-1 and IL-6 mRNAs in peripheral blood monocytes and cell lines.</title>
        <authorList>
            <person name="Gilmore W.H."/>
            <person name="Carter S.D."/>
            <person name="Bennett M."/>
            <person name="Barnes A."/>
            <person name="Kelly D.F."/>
        </authorList>
    </citation>
    <scope>NUCLEOTIDE SEQUENCE [MRNA] OF 28-153</scope>
    <source>
        <strain>Beagle</strain>
        <tissue>Blood</tissue>
    </source>
</reference>
<accession>Q28292</accession>
<accession>Q006K6</accession>
<name>IL1B_CANLF</name>
<keyword id="KW-0202">Cytokine</keyword>
<keyword id="KW-0963">Cytoplasm</keyword>
<keyword id="KW-0395">Inflammatory response</keyword>
<keyword id="KW-0458">Lysosome</keyword>
<keyword id="KW-0497">Mitogen</keyword>
<keyword id="KW-0666">Pyrogen</keyword>
<keyword id="KW-1185">Reference proteome</keyword>
<keyword id="KW-0964">Secreted</keyword>
<evidence type="ECO:0000250" key="1"/>
<evidence type="ECO:0000250" key="2">
    <source>
        <dbReference type="UniProtKB" id="P01584"/>
    </source>
</evidence>
<evidence type="ECO:0000250" key="3">
    <source>
        <dbReference type="UniProtKB" id="P10749"/>
    </source>
</evidence>
<evidence type="ECO:0000305" key="4"/>
<comment type="function">
    <text evidence="2">Potent pro-inflammatory cytokine. Initially discovered as the major endogenous pyrogen, induces prostaglandin synthesis, neutrophil influx and activation, T-cell activation and cytokine production, B-cell activation and antibody production, and fibroblast proliferation and collagen production. Promotes Th17 differentiation of T-cells. Synergizes with IL12/interleukin-12 to induce IFNG synthesis from T-helper 1 (Th1) cells. Plays a role in angiogenesis by inducing VEGF production synergistically with TNF and IL6. Involved in transduction of inflammation downstream of pyroptosis: its mature form is specifically released in the extracellular milieu by passing through the gasdermin-D (GSDMD) pore.</text>
</comment>
<comment type="subunit">
    <text evidence="2">Monomer. In its precursor form, weakly interacts with full-length MEFV; the mature cytokine does not interact at all. Interacts with integrins ITGAV:ITGBV and ITGA5:ITGB1; integrin-binding is required for IL1B signaling. Interacts with cargo receptor TMED10; the interaction is direct and is required for the secretion of IL1B mature form. Interacts with HSP90AB1; the interaction facilitates cargo translocation into the ERGIC. Interacts with HSP90B1; the interaction facilitates cargo translocation into the ERGIC.</text>
</comment>
<comment type="subcellular location">
    <subcellularLocation>
        <location evidence="2">Cytoplasm</location>
        <location evidence="2">Cytosol</location>
    </subcellularLocation>
    <subcellularLocation>
        <location evidence="2">Secreted</location>
    </subcellularLocation>
    <subcellularLocation>
        <location evidence="2">Lysosome</location>
    </subcellularLocation>
    <subcellularLocation>
        <location evidence="3">Secreted</location>
        <location evidence="3">Extracellular exosome</location>
    </subcellularLocation>
    <text evidence="2">The precursor is cytosolic. In response to inflammasome-activating signals, such as ATP for NLRP3 inflammasome or bacterial flagellin for NLRC4 inflammasome, cleaved and secreted. Mature form is secreted and released in the extracellular milieu by passing through the gasdermin-D (GSDMD) pore. In contrast, the precursor form is not released, due to the presence of an acidic region that is proteolytically removed by CASP1 during maturation. The secretion is dependent on protein unfolding and facilitated by the cargo receptor TMED10.</text>
</comment>
<comment type="miscellaneous">
    <text evidence="1">IL1B production occurs in 2 steps, each being controlled by different stimuli. First, inflammatory signals, such as LPS, stimulate the synthesis and promote the accumulation of cytosolic stores of pro-IL1B (priming). Then additional signals are required for inflammasome assembly, leading to CASP1 activation, pro-IL1B processing and eventually secretion of the active cytokine. IL1B processing and secretion are temporarily associated.</text>
</comment>
<comment type="similarity">
    <text evidence="4">Belongs to the IL-1 family.</text>
</comment>
<protein>
    <recommendedName>
        <fullName>Interleukin-1 beta</fullName>
        <shortName>IL-1 beta</shortName>
    </recommendedName>
</protein>
<dbReference type="EMBL" id="DQ923807">
    <property type="protein sequence ID" value="ABJ51908.1"/>
    <property type="molecule type" value="mRNA"/>
</dbReference>
<dbReference type="EMBL" id="Z70047">
    <property type="protein sequence ID" value="CAA93909.1"/>
    <property type="molecule type" value="mRNA"/>
</dbReference>
<dbReference type="SMR" id="Q28292"/>
<dbReference type="FunCoup" id="Q28292">
    <property type="interactions" value="62"/>
</dbReference>
<dbReference type="STRING" id="9615.ENSCAFP00000010762"/>
<dbReference type="PaxDb" id="9612-ENSCAFP00000010762"/>
<dbReference type="eggNOG" id="ENOG502S3E9">
    <property type="taxonomic scope" value="Eukaryota"/>
</dbReference>
<dbReference type="InParanoid" id="Q28292"/>
<dbReference type="OrthoDB" id="9449069at2759"/>
<dbReference type="Proteomes" id="UP000002254">
    <property type="component" value="Unplaced"/>
</dbReference>
<dbReference type="Proteomes" id="UP000694429">
    <property type="component" value="Unplaced"/>
</dbReference>
<dbReference type="Proteomes" id="UP000694542">
    <property type="component" value="Unplaced"/>
</dbReference>
<dbReference type="Proteomes" id="UP000805418">
    <property type="component" value="Unplaced"/>
</dbReference>
<dbReference type="GO" id="GO:0005829">
    <property type="term" value="C:cytosol"/>
    <property type="evidence" value="ECO:0007669"/>
    <property type="project" value="UniProtKB-SubCell"/>
</dbReference>
<dbReference type="GO" id="GO:0005615">
    <property type="term" value="C:extracellular space"/>
    <property type="evidence" value="ECO:0000318"/>
    <property type="project" value="GO_Central"/>
</dbReference>
<dbReference type="GO" id="GO:0005764">
    <property type="term" value="C:lysosome"/>
    <property type="evidence" value="ECO:0007669"/>
    <property type="project" value="UniProtKB-SubCell"/>
</dbReference>
<dbReference type="GO" id="GO:0005125">
    <property type="term" value="F:cytokine activity"/>
    <property type="evidence" value="ECO:0000318"/>
    <property type="project" value="GO_Central"/>
</dbReference>
<dbReference type="GO" id="GO:0005178">
    <property type="term" value="F:integrin binding"/>
    <property type="evidence" value="ECO:0000250"/>
    <property type="project" value="UniProtKB"/>
</dbReference>
<dbReference type="GO" id="GO:0005149">
    <property type="term" value="F:interleukin-1 receptor binding"/>
    <property type="evidence" value="ECO:0007669"/>
    <property type="project" value="InterPro"/>
</dbReference>
<dbReference type="GO" id="GO:0071222">
    <property type="term" value="P:cellular response to lipopolysaccharide"/>
    <property type="evidence" value="ECO:0000318"/>
    <property type="project" value="GO_Central"/>
</dbReference>
<dbReference type="GO" id="GO:0019221">
    <property type="term" value="P:cytokine-mediated signaling pathway"/>
    <property type="evidence" value="ECO:0000318"/>
    <property type="project" value="GO_Central"/>
</dbReference>
<dbReference type="GO" id="GO:0001660">
    <property type="term" value="P:fever generation"/>
    <property type="evidence" value="ECO:0007669"/>
    <property type="project" value="UniProtKB-KW"/>
</dbReference>
<dbReference type="GO" id="GO:0006955">
    <property type="term" value="P:immune response"/>
    <property type="evidence" value="ECO:0000318"/>
    <property type="project" value="GO_Central"/>
</dbReference>
<dbReference type="GO" id="GO:0006954">
    <property type="term" value="P:inflammatory response"/>
    <property type="evidence" value="ECO:0000318"/>
    <property type="project" value="GO_Central"/>
</dbReference>
<dbReference type="GO" id="GO:0043123">
    <property type="term" value="P:positive regulation of canonical NF-kappaB signal transduction"/>
    <property type="evidence" value="ECO:0000318"/>
    <property type="project" value="GO_Central"/>
</dbReference>
<dbReference type="GO" id="GO:0051781">
    <property type="term" value="P:positive regulation of cell division"/>
    <property type="evidence" value="ECO:0007669"/>
    <property type="project" value="UniProtKB-KW"/>
</dbReference>
<dbReference type="GO" id="GO:0033092">
    <property type="term" value="P:positive regulation of immature T cell proliferation in thymus"/>
    <property type="evidence" value="ECO:0000318"/>
    <property type="project" value="GO_Central"/>
</dbReference>
<dbReference type="GO" id="GO:2000556">
    <property type="term" value="P:positive regulation of T-helper 1 cell cytokine production"/>
    <property type="evidence" value="ECO:0000250"/>
    <property type="project" value="UniProtKB"/>
</dbReference>
<dbReference type="GO" id="GO:0032729">
    <property type="term" value="P:positive regulation of type II interferon production"/>
    <property type="evidence" value="ECO:0000250"/>
    <property type="project" value="UniProtKB"/>
</dbReference>
<dbReference type="GO" id="GO:0070372">
    <property type="term" value="P:regulation of ERK1 and ERK2 cascade"/>
    <property type="evidence" value="ECO:0000318"/>
    <property type="project" value="GO_Central"/>
</dbReference>
<dbReference type="GO" id="GO:0010573">
    <property type="term" value="P:vascular endothelial growth factor production"/>
    <property type="evidence" value="ECO:0000250"/>
    <property type="project" value="UniProtKB"/>
</dbReference>
<dbReference type="CDD" id="cd23296">
    <property type="entry name" value="beta-trefoil_IL1B"/>
    <property type="match status" value="1"/>
</dbReference>
<dbReference type="FunFam" id="2.80.10.50:FF:000027">
    <property type="entry name" value="Interleukin-1 beta"/>
    <property type="match status" value="1"/>
</dbReference>
<dbReference type="Gene3D" id="2.80.10.50">
    <property type="match status" value="1"/>
</dbReference>
<dbReference type="InterPro" id="IPR020877">
    <property type="entry name" value="IL-1_CS"/>
</dbReference>
<dbReference type="InterPro" id="IPR000975">
    <property type="entry name" value="IL-1_fam"/>
</dbReference>
<dbReference type="InterPro" id="IPR003502">
    <property type="entry name" value="IL-1_propep"/>
</dbReference>
<dbReference type="InterPro" id="IPR008996">
    <property type="entry name" value="IL1/FGF"/>
</dbReference>
<dbReference type="PANTHER" id="PTHR10078:SF30">
    <property type="entry name" value="INTERLEUKIN-1 BETA"/>
    <property type="match status" value="1"/>
</dbReference>
<dbReference type="PANTHER" id="PTHR10078">
    <property type="entry name" value="INTERLEUKIN-1 FAMILY MEMBER"/>
    <property type="match status" value="1"/>
</dbReference>
<dbReference type="Pfam" id="PF00340">
    <property type="entry name" value="IL1"/>
    <property type="match status" value="1"/>
</dbReference>
<dbReference type="Pfam" id="PF02394">
    <property type="entry name" value="IL1_propep"/>
    <property type="match status" value="1"/>
</dbReference>
<dbReference type="PRINTS" id="PR00262">
    <property type="entry name" value="IL1HBGF"/>
</dbReference>
<dbReference type="PRINTS" id="PR00264">
    <property type="entry name" value="INTERLEUKIN1"/>
</dbReference>
<dbReference type="PRINTS" id="PR01359">
    <property type="entry name" value="INTRLEUKIN1B"/>
</dbReference>
<dbReference type="PRINTS" id="PR01357">
    <property type="entry name" value="INTRLEUKN1AB"/>
</dbReference>
<dbReference type="SMART" id="SM00125">
    <property type="entry name" value="IL1"/>
    <property type="match status" value="1"/>
</dbReference>
<dbReference type="SUPFAM" id="SSF50353">
    <property type="entry name" value="Cytokine"/>
    <property type="match status" value="1"/>
</dbReference>
<dbReference type="PROSITE" id="PS00253">
    <property type="entry name" value="INTERLEUKIN_1"/>
    <property type="match status" value="1"/>
</dbReference>
<gene>
    <name type="primary">IL1B</name>
</gene>
<organism>
    <name type="scientific">Canis lupus familiaris</name>
    <name type="common">Dog</name>
    <name type="synonym">Canis familiaris</name>
    <dbReference type="NCBI Taxonomy" id="9615"/>
    <lineage>
        <taxon>Eukaryota</taxon>
        <taxon>Metazoa</taxon>
        <taxon>Chordata</taxon>
        <taxon>Craniata</taxon>
        <taxon>Vertebrata</taxon>
        <taxon>Euteleostomi</taxon>
        <taxon>Mammalia</taxon>
        <taxon>Eutheria</taxon>
        <taxon>Laurasiatheria</taxon>
        <taxon>Carnivora</taxon>
        <taxon>Caniformia</taxon>
        <taxon>Canidae</taxon>
        <taxon>Canis</taxon>
    </lineage>
</organism>
<sequence length="266" mass="30259">MAAVPELTSEMMAYSSNNENDLFFEADGPGNDVKCCCQDLNHSSLVDEGIQLQVSHQLCNKSLRHFVSVIVALEKLKKPCPQVLQEDDLKSIFCYIFEEEPIICKTDADNFMSDAAMQSVDCKLQDISHKYLVLSNSYELRALHLNGENVNKQVVFHMSFVHGDESNNKIPVVLGIKQKNLYLSCVMKDGKPTLQLEKVDPKVYPKRKMEKRFVFNKIEIKNTVEFESSQYPNWYISTSQVEGMPVFLGNTRGGQDITDFTMEFSS</sequence>
<proteinExistence type="evidence at transcript level"/>
<feature type="propeptide" id="PRO_0000015285" evidence="1">
    <location>
        <begin position="1"/>
        <end position="114"/>
    </location>
</feature>
<feature type="chain" id="PRO_0000015286" description="Interleukin-1 beta">
    <location>
        <begin position="115"/>
        <end position="266"/>
    </location>
</feature>
<feature type="site" description="Important for interaction with integrin" evidence="2">
    <location>
        <position position="169"/>
    </location>
</feature>
<feature type="site" description="Important for interaction with integrin" evidence="2">
    <location>
        <position position="177"/>
    </location>
</feature>
<feature type="site" description="Important for interaction with integrin" evidence="2">
    <location>
        <position position="179"/>
    </location>
</feature>
<feature type="site" description="Important for interaction with integrin" evidence="2">
    <location>
        <position position="188"/>
    </location>
</feature>
<feature type="site" description="Important for interaction with integrin" evidence="2">
    <location>
        <position position="202"/>
    </location>
</feature>
<feature type="sequence conflict" description="In Ref. 2; CAA93909." evidence="4" ref="2">
    <original>ND</original>
    <variation>GSN</variation>
    <location>
        <begin position="31"/>
        <end position="32"/>
    </location>
</feature>
<feature type="sequence conflict" description="In Ref. 2; CAA93909." evidence="4" ref="2">
    <original>Q</original>
    <variation>A</variation>
    <location>
        <position position="153"/>
    </location>
</feature>